<accession>B1XP73</accession>
<gene>
    <name evidence="1" type="primary">rsmH</name>
    <name type="synonym">mraW</name>
    <name type="ordered locus">SYNPCC7002_A1677</name>
</gene>
<keyword id="KW-0963">Cytoplasm</keyword>
<keyword id="KW-0489">Methyltransferase</keyword>
<keyword id="KW-1185">Reference proteome</keyword>
<keyword id="KW-0698">rRNA processing</keyword>
<keyword id="KW-0949">S-adenosyl-L-methionine</keyword>
<keyword id="KW-0808">Transferase</keyword>
<evidence type="ECO:0000255" key="1">
    <source>
        <dbReference type="HAMAP-Rule" id="MF_01007"/>
    </source>
</evidence>
<feature type="chain" id="PRO_0000387178" description="Ribosomal RNA small subunit methyltransferase H">
    <location>
        <begin position="1"/>
        <end position="290"/>
    </location>
</feature>
<feature type="binding site" evidence="1">
    <location>
        <begin position="35"/>
        <end position="37"/>
    </location>
    <ligand>
        <name>S-adenosyl-L-methionine</name>
        <dbReference type="ChEBI" id="CHEBI:59789"/>
    </ligand>
</feature>
<feature type="binding site" evidence="1">
    <location>
        <position position="54"/>
    </location>
    <ligand>
        <name>S-adenosyl-L-methionine</name>
        <dbReference type="ChEBI" id="CHEBI:59789"/>
    </ligand>
</feature>
<feature type="binding site" evidence="1">
    <location>
        <position position="81"/>
    </location>
    <ligand>
        <name>S-adenosyl-L-methionine</name>
        <dbReference type="ChEBI" id="CHEBI:59789"/>
    </ligand>
</feature>
<feature type="binding site" evidence="1">
    <location>
        <position position="97"/>
    </location>
    <ligand>
        <name>S-adenosyl-L-methionine</name>
        <dbReference type="ChEBI" id="CHEBI:59789"/>
    </ligand>
</feature>
<feature type="binding site" evidence="1">
    <location>
        <position position="104"/>
    </location>
    <ligand>
        <name>S-adenosyl-L-methionine</name>
        <dbReference type="ChEBI" id="CHEBI:59789"/>
    </ligand>
</feature>
<dbReference type="EC" id="2.1.1.199" evidence="1"/>
<dbReference type="EMBL" id="CP000951">
    <property type="protein sequence ID" value="ACA99666.1"/>
    <property type="molecule type" value="Genomic_DNA"/>
</dbReference>
<dbReference type="RefSeq" id="WP_012307289.1">
    <property type="nucleotide sequence ID" value="NZ_JAHHPU010000002.1"/>
</dbReference>
<dbReference type="SMR" id="B1XP73"/>
<dbReference type="STRING" id="32049.SYNPCC7002_A1677"/>
<dbReference type="KEGG" id="syp:SYNPCC7002_A1677"/>
<dbReference type="eggNOG" id="COG0275">
    <property type="taxonomic scope" value="Bacteria"/>
</dbReference>
<dbReference type="HOGENOM" id="CLU_038422_3_0_3"/>
<dbReference type="Proteomes" id="UP000001688">
    <property type="component" value="Chromosome"/>
</dbReference>
<dbReference type="GO" id="GO:0005737">
    <property type="term" value="C:cytoplasm"/>
    <property type="evidence" value="ECO:0007669"/>
    <property type="project" value="UniProtKB-SubCell"/>
</dbReference>
<dbReference type="GO" id="GO:0071424">
    <property type="term" value="F:rRNA (cytosine-N4-)-methyltransferase activity"/>
    <property type="evidence" value="ECO:0007669"/>
    <property type="project" value="UniProtKB-UniRule"/>
</dbReference>
<dbReference type="GO" id="GO:0070475">
    <property type="term" value="P:rRNA base methylation"/>
    <property type="evidence" value="ECO:0007669"/>
    <property type="project" value="UniProtKB-UniRule"/>
</dbReference>
<dbReference type="CDD" id="cd02440">
    <property type="entry name" value="AdoMet_MTases"/>
    <property type="match status" value="1"/>
</dbReference>
<dbReference type="FunFam" id="1.10.150.170:FF:000003">
    <property type="entry name" value="Ribosomal RNA small subunit methyltransferase H"/>
    <property type="match status" value="1"/>
</dbReference>
<dbReference type="Gene3D" id="1.10.150.170">
    <property type="entry name" value="Putative methyltransferase TM0872, insert domain"/>
    <property type="match status" value="1"/>
</dbReference>
<dbReference type="Gene3D" id="3.40.50.150">
    <property type="entry name" value="Vaccinia Virus protein VP39"/>
    <property type="match status" value="1"/>
</dbReference>
<dbReference type="HAMAP" id="MF_01007">
    <property type="entry name" value="16SrRNA_methyltr_H"/>
    <property type="match status" value="1"/>
</dbReference>
<dbReference type="InterPro" id="IPR002903">
    <property type="entry name" value="RsmH"/>
</dbReference>
<dbReference type="InterPro" id="IPR023397">
    <property type="entry name" value="SAM-dep_MeTrfase_MraW_recog"/>
</dbReference>
<dbReference type="InterPro" id="IPR029063">
    <property type="entry name" value="SAM-dependent_MTases_sf"/>
</dbReference>
<dbReference type="NCBIfam" id="TIGR00006">
    <property type="entry name" value="16S rRNA (cytosine(1402)-N(4))-methyltransferase RsmH"/>
    <property type="match status" value="1"/>
</dbReference>
<dbReference type="PANTHER" id="PTHR11265:SF0">
    <property type="entry name" value="12S RRNA N4-METHYLCYTIDINE METHYLTRANSFERASE"/>
    <property type="match status" value="1"/>
</dbReference>
<dbReference type="PANTHER" id="PTHR11265">
    <property type="entry name" value="S-ADENOSYL-METHYLTRANSFERASE MRAW"/>
    <property type="match status" value="1"/>
</dbReference>
<dbReference type="Pfam" id="PF01795">
    <property type="entry name" value="Methyltransf_5"/>
    <property type="match status" value="1"/>
</dbReference>
<dbReference type="PIRSF" id="PIRSF004486">
    <property type="entry name" value="MraW"/>
    <property type="match status" value="1"/>
</dbReference>
<dbReference type="SUPFAM" id="SSF81799">
    <property type="entry name" value="Putative methyltransferase TM0872, insert domain"/>
    <property type="match status" value="1"/>
</dbReference>
<dbReference type="SUPFAM" id="SSF53335">
    <property type="entry name" value="S-adenosyl-L-methionine-dependent methyltransferases"/>
    <property type="match status" value="1"/>
</dbReference>
<proteinExistence type="inferred from homology"/>
<sequence length="290" mass="33000">MAAEFKHISVLKEELVAGLGVKPEGHYLDVTLGGGGHTELILQQYPDVRVTGVDRDSQAIAAASERLKSFGDRFRAVRSNFGEYQPQGEKFDGIIADLGVSSVQFDQGDRGFSFRFDAPLDMRMDQQQTLTAADIVNTYEEKALANLFYEYGDERLSRQIAKKIVMKRPIQTTKELEEIVFYTYHPKARKVKIHPATRVFQALRIAVNGELDALQYLLVNAPQWLKPQGRLGIISFHSLEDRLVKNAFRQRDIWRILTKKPMVASETEINQNPRARSAKLRFAELKETTE</sequence>
<organism>
    <name type="scientific">Picosynechococcus sp. (strain ATCC 27264 / PCC 7002 / PR-6)</name>
    <name type="common">Agmenellum quadruplicatum</name>
    <dbReference type="NCBI Taxonomy" id="32049"/>
    <lineage>
        <taxon>Bacteria</taxon>
        <taxon>Bacillati</taxon>
        <taxon>Cyanobacteriota</taxon>
        <taxon>Cyanophyceae</taxon>
        <taxon>Oscillatoriophycideae</taxon>
        <taxon>Chroococcales</taxon>
        <taxon>Geminocystaceae</taxon>
        <taxon>Picosynechococcus</taxon>
    </lineage>
</organism>
<protein>
    <recommendedName>
        <fullName evidence="1">Ribosomal RNA small subunit methyltransferase H</fullName>
        <ecNumber evidence="1">2.1.1.199</ecNumber>
    </recommendedName>
    <alternativeName>
        <fullName evidence="1">16S rRNA m(4)C1402 methyltransferase</fullName>
    </alternativeName>
    <alternativeName>
        <fullName evidence="1">rRNA (cytosine-N(4)-)-methyltransferase RsmH</fullName>
    </alternativeName>
</protein>
<reference key="1">
    <citation type="submission" date="2008-02" db="EMBL/GenBank/DDBJ databases">
        <title>Complete sequence of Synechococcus sp. PCC 7002.</title>
        <authorList>
            <person name="Li T."/>
            <person name="Zhao J."/>
            <person name="Zhao C."/>
            <person name="Liu Z."/>
            <person name="Zhao F."/>
            <person name="Marquardt J."/>
            <person name="Nomura C.T."/>
            <person name="Persson S."/>
            <person name="Detter J.C."/>
            <person name="Richardson P.M."/>
            <person name="Lanz C."/>
            <person name="Schuster S.C."/>
            <person name="Wang J."/>
            <person name="Li S."/>
            <person name="Huang X."/>
            <person name="Cai T."/>
            <person name="Yu Z."/>
            <person name="Luo J."/>
            <person name="Zhao J."/>
            <person name="Bryant D.A."/>
        </authorList>
    </citation>
    <scope>NUCLEOTIDE SEQUENCE [LARGE SCALE GENOMIC DNA]</scope>
    <source>
        <strain>ATCC 27264 / PCC 7002 / PR-6</strain>
    </source>
</reference>
<name>RSMH_PICP2</name>
<comment type="function">
    <text evidence="1">Specifically methylates the N4 position of cytidine in position 1402 (C1402) of 16S rRNA.</text>
</comment>
<comment type="catalytic activity">
    <reaction evidence="1">
        <text>cytidine(1402) in 16S rRNA + S-adenosyl-L-methionine = N(4)-methylcytidine(1402) in 16S rRNA + S-adenosyl-L-homocysteine + H(+)</text>
        <dbReference type="Rhea" id="RHEA:42928"/>
        <dbReference type="Rhea" id="RHEA-COMP:10286"/>
        <dbReference type="Rhea" id="RHEA-COMP:10287"/>
        <dbReference type="ChEBI" id="CHEBI:15378"/>
        <dbReference type="ChEBI" id="CHEBI:57856"/>
        <dbReference type="ChEBI" id="CHEBI:59789"/>
        <dbReference type="ChEBI" id="CHEBI:74506"/>
        <dbReference type="ChEBI" id="CHEBI:82748"/>
        <dbReference type="EC" id="2.1.1.199"/>
    </reaction>
</comment>
<comment type="subcellular location">
    <subcellularLocation>
        <location evidence="1">Cytoplasm</location>
    </subcellularLocation>
</comment>
<comment type="similarity">
    <text evidence="1">Belongs to the methyltransferase superfamily. RsmH family.</text>
</comment>